<dbReference type="EC" id="2.3.2.27" evidence="1"/>
<dbReference type="EMBL" id="EU935009">
    <property type="protein sequence ID" value="ACH72646.1"/>
    <property type="molecule type" value="mRNA"/>
</dbReference>
<dbReference type="EMBL" id="AK002416">
    <property type="protein sequence ID" value="BAB22084.1"/>
    <property type="molecule type" value="mRNA"/>
</dbReference>
<dbReference type="EMBL" id="AK044088">
    <property type="protein sequence ID" value="BAC31768.1"/>
    <property type="molecule type" value="mRNA"/>
</dbReference>
<dbReference type="EMBL" id="AK076419">
    <property type="protein sequence ID" value="BAC36332.1"/>
    <property type="molecule type" value="mRNA"/>
</dbReference>
<dbReference type="EMBL" id="AK083295">
    <property type="protein sequence ID" value="BAC38848.1"/>
    <property type="molecule type" value="mRNA"/>
</dbReference>
<dbReference type="EMBL" id="AK153956">
    <property type="protein sequence ID" value="BAE32279.1"/>
    <property type="molecule type" value="mRNA"/>
</dbReference>
<dbReference type="EMBL" id="AK170149">
    <property type="protein sequence ID" value="BAE41597.1"/>
    <property type="molecule type" value="mRNA"/>
</dbReference>
<dbReference type="EMBL" id="AL807249">
    <property type="status" value="NOT_ANNOTATED_CDS"/>
    <property type="molecule type" value="Genomic_DNA"/>
</dbReference>
<dbReference type="EMBL" id="BC019516">
    <property type="protein sequence ID" value="AAH19516.1"/>
    <property type="molecule type" value="mRNA"/>
</dbReference>
<dbReference type="CCDS" id="CCDS18828.1">
    <molecule id="Q8VCM5-1"/>
</dbReference>
<dbReference type="RefSeq" id="NP_080965.2">
    <molecule id="Q8VCM5-1"/>
    <property type="nucleotide sequence ID" value="NM_026689.3"/>
</dbReference>
<dbReference type="RefSeq" id="XP_006539197.1">
    <molecule id="Q8VCM5-3"/>
    <property type="nucleotide sequence ID" value="XM_006539134.5"/>
</dbReference>
<dbReference type="SMR" id="Q8VCM5"/>
<dbReference type="BioGRID" id="212817">
    <property type="interactions" value="2"/>
</dbReference>
<dbReference type="FunCoup" id="Q8VCM5">
    <property type="interactions" value="1518"/>
</dbReference>
<dbReference type="STRING" id="10090.ENSMUSP00000039604"/>
<dbReference type="iPTMnet" id="Q8VCM5"/>
<dbReference type="PhosphoSitePlus" id="Q8VCM5"/>
<dbReference type="PaxDb" id="10090-ENSMUSP00000039604"/>
<dbReference type="PeptideAtlas" id="Q8VCM5"/>
<dbReference type="ProteomicsDB" id="290221">
    <molecule id="Q8VCM5-1"/>
</dbReference>
<dbReference type="ProteomicsDB" id="290222">
    <molecule id="Q8VCM5-2"/>
</dbReference>
<dbReference type="ProteomicsDB" id="290223">
    <molecule id="Q8VCM5-3"/>
</dbReference>
<dbReference type="Pumba" id="Q8VCM5"/>
<dbReference type="Antibodypedia" id="2986">
    <property type="antibodies" value="267 antibodies from 31 providers"/>
</dbReference>
<dbReference type="DNASU" id="68350"/>
<dbReference type="Ensembl" id="ENSMUST00000044058.11">
    <molecule id="Q8VCM5-1"/>
    <property type="protein sequence ID" value="ENSMUSP00000039604.5"/>
    <property type="gene ID" value="ENSMUSG00000041241.13"/>
</dbReference>
<dbReference type="Ensembl" id="ENSMUST00000105813.8">
    <molecule id="Q8VCM5-3"/>
    <property type="protein sequence ID" value="ENSMUSP00000101439.2"/>
    <property type="gene ID" value="ENSMUSG00000041241.13"/>
</dbReference>
<dbReference type="Ensembl" id="ENSMUST00000105815.2">
    <molecule id="Q8VCM5-2"/>
    <property type="protein sequence ID" value="ENSMUSP00000101441.2"/>
    <property type="gene ID" value="ENSMUSG00000041241.13"/>
</dbReference>
<dbReference type="GeneID" id="68350"/>
<dbReference type="KEGG" id="mmu:68350"/>
<dbReference type="UCSC" id="uc008vky.1">
    <molecule id="Q8VCM5-1"/>
    <property type="organism name" value="mouse"/>
</dbReference>
<dbReference type="AGR" id="MGI:1915600"/>
<dbReference type="CTD" id="79594"/>
<dbReference type="MGI" id="MGI:1915600">
    <property type="gene designation" value="Mul1"/>
</dbReference>
<dbReference type="VEuPathDB" id="HostDB:ENSMUSG00000041241"/>
<dbReference type="eggNOG" id="KOG1571">
    <property type="taxonomic scope" value="Eukaryota"/>
</dbReference>
<dbReference type="GeneTree" id="ENSGT00390000012141"/>
<dbReference type="HOGENOM" id="CLU_050604_1_0_1"/>
<dbReference type="InParanoid" id="Q8VCM5"/>
<dbReference type="OMA" id="YILWKQY"/>
<dbReference type="OrthoDB" id="66726at2759"/>
<dbReference type="PhylomeDB" id="Q8VCM5"/>
<dbReference type="TreeFam" id="TF325195"/>
<dbReference type="Reactome" id="R-MMU-5689880">
    <property type="pathway name" value="Ub-specific processing proteases"/>
</dbReference>
<dbReference type="Reactome" id="R-MMU-8951664">
    <property type="pathway name" value="Neddylation"/>
</dbReference>
<dbReference type="Reactome" id="R-MMU-9755511">
    <property type="pathway name" value="KEAP1-NFE2L2 pathway"/>
</dbReference>
<dbReference type="UniPathway" id="UPA00143"/>
<dbReference type="UniPathway" id="UPA00886"/>
<dbReference type="BioGRID-ORCS" id="68350">
    <property type="hits" value="3 hits in 81 CRISPR screens"/>
</dbReference>
<dbReference type="ChiTaRS" id="Mul1">
    <property type="organism name" value="mouse"/>
</dbReference>
<dbReference type="PRO" id="PR:Q8VCM5"/>
<dbReference type="Proteomes" id="UP000000589">
    <property type="component" value="Chromosome 4"/>
</dbReference>
<dbReference type="RNAct" id="Q8VCM5">
    <property type="molecule type" value="protein"/>
</dbReference>
<dbReference type="Bgee" id="ENSMUSG00000041241">
    <property type="expression patterns" value="Expressed in facial nucleus and 254 other cell types or tissues"/>
</dbReference>
<dbReference type="GO" id="GO:0030424">
    <property type="term" value="C:axon"/>
    <property type="evidence" value="ECO:0007669"/>
    <property type="project" value="Ensembl"/>
</dbReference>
<dbReference type="GO" id="GO:0005741">
    <property type="term" value="C:mitochondrial outer membrane"/>
    <property type="evidence" value="ECO:0000250"/>
    <property type="project" value="UniProtKB"/>
</dbReference>
<dbReference type="GO" id="GO:0005739">
    <property type="term" value="C:mitochondrion"/>
    <property type="evidence" value="ECO:0007005"/>
    <property type="project" value="MGI"/>
</dbReference>
<dbReference type="GO" id="GO:0043025">
    <property type="term" value="C:neuronal cell body"/>
    <property type="evidence" value="ECO:0007669"/>
    <property type="project" value="Ensembl"/>
</dbReference>
<dbReference type="GO" id="GO:0005777">
    <property type="term" value="C:peroxisome"/>
    <property type="evidence" value="ECO:0000250"/>
    <property type="project" value="UniProtKB"/>
</dbReference>
<dbReference type="GO" id="GO:0042802">
    <property type="term" value="F:identical protein binding"/>
    <property type="evidence" value="ECO:0000250"/>
    <property type="project" value="UniProtKB"/>
</dbReference>
<dbReference type="GO" id="GO:0002039">
    <property type="term" value="F:p53 binding"/>
    <property type="evidence" value="ECO:0000250"/>
    <property type="project" value="UniProtKB"/>
</dbReference>
<dbReference type="GO" id="GO:0019789">
    <property type="term" value="F:SUMO transferase activity"/>
    <property type="evidence" value="ECO:0007669"/>
    <property type="project" value="Ensembl"/>
</dbReference>
<dbReference type="GO" id="GO:0061630">
    <property type="term" value="F:ubiquitin protein ligase activity"/>
    <property type="evidence" value="ECO:0000250"/>
    <property type="project" value="UniProtKB"/>
</dbReference>
<dbReference type="GO" id="GO:0031625">
    <property type="term" value="F:ubiquitin protein ligase binding"/>
    <property type="evidence" value="ECO:0007669"/>
    <property type="project" value="Ensembl"/>
</dbReference>
<dbReference type="GO" id="GO:0008270">
    <property type="term" value="F:zinc ion binding"/>
    <property type="evidence" value="ECO:0007669"/>
    <property type="project" value="UniProtKB-KW"/>
</dbReference>
<dbReference type="GO" id="GO:0006915">
    <property type="term" value="P:apoptotic process"/>
    <property type="evidence" value="ECO:0007669"/>
    <property type="project" value="UniProtKB-KW"/>
</dbReference>
<dbReference type="GO" id="GO:0071360">
    <property type="term" value="P:cellular response to exogenous dsRNA"/>
    <property type="evidence" value="ECO:0000250"/>
    <property type="project" value="UniProtKB"/>
</dbReference>
<dbReference type="GO" id="GO:0000266">
    <property type="term" value="P:mitochondrial fission"/>
    <property type="evidence" value="ECO:0000250"/>
    <property type="project" value="UniProtKB"/>
</dbReference>
<dbReference type="GO" id="GO:0051646">
    <property type="term" value="P:mitochondrion localization"/>
    <property type="evidence" value="ECO:0000250"/>
    <property type="project" value="UniProtKB"/>
</dbReference>
<dbReference type="GO" id="GO:0071650">
    <property type="term" value="P:negative regulation of chemokine (C-C motif) ligand 5 production"/>
    <property type="evidence" value="ECO:0000250"/>
    <property type="project" value="UniProtKB"/>
</dbReference>
<dbReference type="GO" id="GO:0050689">
    <property type="term" value="P:negative regulation of defense response to virus by host"/>
    <property type="evidence" value="ECO:0000250"/>
    <property type="project" value="UniProtKB"/>
</dbReference>
<dbReference type="GO" id="GO:0045824">
    <property type="term" value="P:negative regulation of innate immune response"/>
    <property type="evidence" value="ECO:0000250"/>
    <property type="project" value="UniProtKB"/>
</dbReference>
<dbReference type="GO" id="GO:0010637">
    <property type="term" value="P:negative regulation of mitochondrial fusion"/>
    <property type="evidence" value="ECO:0007669"/>
    <property type="project" value="Ensembl"/>
</dbReference>
<dbReference type="GO" id="GO:0051898">
    <property type="term" value="P:negative regulation of phosphatidylinositol 3-kinase/protein kinase B signal transduction"/>
    <property type="evidence" value="ECO:0000250"/>
    <property type="project" value="UniProtKB"/>
</dbReference>
<dbReference type="GO" id="GO:0060339">
    <property type="term" value="P:negative regulation of type I interferon-mediated signaling pathway"/>
    <property type="evidence" value="ECO:0000250"/>
    <property type="project" value="UniProtKB"/>
</dbReference>
<dbReference type="GO" id="GO:0043123">
    <property type="term" value="P:positive regulation of canonical NF-kappaB signal transduction"/>
    <property type="evidence" value="ECO:0000250"/>
    <property type="project" value="UniProtKB"/>
</dbReference>
<dbReference type="GO" id="GO:1903861">
    <property type="term" value="P:positive regulation of dendrite extension"/>
    <property type="evidence" value="ECO:0000315"/>
    <property type="project" value="ParkinsonsUK-UCL"/>
</dbReference>
<dbReference type="GO" id="GO:0090141">
    <property type="term" value="P:positive regulation of mitochondrial fission"/>
    <property type="evidence" value="ECO:0007669"/>
    <property type="project" value="Ensembl"/>
</dbReference>
<dbReference type="GO" id="GO:0033235">
    <property type="term" value="P:positive regulation of protein sumoylation"/>
    <property type="evidence" value="ECO:0007669"/>
    <property type="project" value="Ensembl"/>
</dbReference>
<dbReference type="GO" id="GO:1905091">
    <property type="term" value="P:positive regulation of type 2 mitophagy"/>
    <property type="evidence" value="ECO:0000315"/>
    <property type="project" value="ParkinsonsUK-UCL"/>
</dbReference>
<dbReference type="GO" id="GO:0031648">
    <property type="term" value="P:protein destabilization"/>
    <property type="evidence" value="ECO:0007669"/>
    <property type="project" value="Ensembl"/>
</dbReference>
<dbReference type="GO" id="GO:0000209">
    <property type="term" value="P:protein polyubiquitination"/>
    <property type="evidence" value="ECO:0000250"/>
    <property type="project" value="UniProtKB"/>
</dbReference>
<dbReference type="GO" id="GO:0050821">
    <property type="term" value="P:protein stabilization"/>
    <property type="evidence" value="ECO:0007669"/>
    <property type="project" value="Ensembl"/>
</dbReference>
<dbReference type="GO" id="GO:0016925">
    <property type="term" value="P:protein sumoylation"/>
    <property type="evidence" value="ECO:0007669"/>
    <property type="project" value="UniProtKB-UniPathway"/>
</dbReference>
<dbReference type="GO" id="GO:0016567">
    <property type="term" value="P:protein ubiquitination"/>
    <property type="evidence" value="ECO:0000250"/>
    <property type="project" value="UniProtKB"/>
</dbReference>
<dbReference type="GO" id="GO:0051881">
    <property type="term" value="P:regulation of mitochondrial membrane potential"/>
    <property type="evidence" value="ECO:0000316"/>
    <property type="project" value="ParkinsonsUK-UCL"/>
</dbReference>
<dbReference type="GO" id="GO:1901028">
    <property type="term" value="P:regulation of mitochondrial outer membrane permeabilization involved in apoptotic signaling pathway"/>
    <property type="evidence" value="ECO:0000250"/>
    <property type="project" value="UniProtKB"/>
</dbReference>
<dbReference type="GO" id="GO:0031647">
    <property type="term" value="P:regulation of protein stability"/>
    <property type="evidence" value="ECO:0000315"/>
    <property type="project" value="ParkinsonsUK-UCL"/>
</dbReference>
<dbReference type="CDD" id="cd16648">
    <property type="entry name" value="mRING-HC-C3HC5_MAPL"/>
    <property type="match status" value="1"/>
</dbReference>
<dbReference type="FunFam" id="3.30.40.10:FF:000351">
    <property type="entry name" value="Mitochondrial ubiquitin ligase activator of NFKB 1"/>
    <property type="match status" value="1"/>
</dbReference>
<dbReference type="Gene3D" id="3.30.40.10">
    <property type="entry name" value="Zinc/RING finger domain, C3HC4 (zinc finger)"/>
    <property type="match status" value="1"/>
</dbReference>
<dbReference type="InterPro" id="IPR051652">
    <property type="entry name" value="MDM2_MDM4_MUL1"/>
</dbReference>
<dbReference type="InterPro" id="IPR022170">
    <property type="entry name" value="MUL1-like"/>
</dbReference>
<dbReference type="InterPro" id="IPR001841">
    <property type="entry name" value="Znf_RING"/>
</dbReference>
<dbReference type="InterPro" id="IPR013083">
    <property type="entry name" value="Znf_RING/FYVE/PHD"/>
</dbReference>
<dbReference type="PANTHER" id="PTHR12183">
    <property type="entry name" value="MITOCHONDRIAL UBIQUITIN LIGASE ACTIVATOR OF NFKB 1"/>
    <property type="match status" value="1"/>
</dbReference>
<dbReference type="PANTHER" id="PTHR12183:SF4">
    <property type="entry name" value="MITOCHONDRIAL UBIQUITIN LIGASE ACTIVATOR OF NFKB 1"/>
    <property type="match status" value="1"/>
</dbReference>
<dbReference type="Pfam" id="PF12483">
    <property type="entry name" value="GIDE"/>
    <property type="match status" value="1"/>
</dbReference>
<dbReference type="Pfam" id="PF13920">
    <property type="entry name" value="zf-C3HC4_3"/>
    <property type="match status" value="1"/>
</dbReference>
<dbReference type="SUPFAM" id="SSF57850">
    <property type="entry name" value="RING/U-box"/>
    <property type="match status" value="1"/>
</dbReference>
<dbReference type="PROSITE" id="PS50089">
    <property type="entry name" value="ZF_RING_2"/>
    <property type="match status" value="1"/>
</dbReference>
<keyword id="KW-0025">Alternative splicing</keyword>
<keyword id="KW-0053">Apoptosis</keyword>
<keyword id="KW-1017">Isopeptide bond</keyword>
<keyword id="KW-0472">Membrane</keyword>
<keyword id="KW-0479">Metal-binding</keyword>
<keyword id="KW-0496">Mitochondrion</keyword>
<keyword id="KW-1000">Mitochondrion outer membrane</keyword>
<keyword id="KW-0576">Peroxisome</keyword>
<keyword id="KW-1185">Reference proteome</keyword>
<keyword id="KW-0808">Transferase</keyword>
<keyword id="KW-0812">Transmembrane</keyword>
<keyword id="KW-1133">Transmembrane helix</keyword>
<keyword id="KW-0832">Ubl conjugation</keyword>
<keyword id="KW-0833">Ubl conjugation pathway</keyword>
<keyword id="KW-0862">Zinc</keyword>
<keyword id="KW-0863">Zinc-finger</keyword>
<feature type="chain" id="PRO_0000277662" description="Mitochondrial ubiquitin ligase activator of NFKB 1">
    <location>
        <begin position="1"/>
        <end position="352"/>
    </location>
</feature>
<feature type="topological domain" description="Cytoplasmic" evidence="2">
    <location>
        <begin position="1"/>
        <end position="8"/>
    </location>
</feature>
<feature type="transmembrane region" description="Helical" evidence="2">
    <location>
        <begin position="9"/>
        <end position="29"/>
    </location>
</feature>
<feature type="topological domain" description="Mitochondrial intermembrane" evidence="2">
    <location>
        <begin position="30"/>
        <end position="238"/>
    </location>
</feature>
<feature type="transmembrane region" description="Helical" evidence="2">
    <location>
        <begin position="239"/>
        <end position="259"/>
    </location>
</feature>
<feature type="topological domain" description="Cytoplasmic" evidence="2">
    <location>
        <begin position="260"/>
        <end position="352"/>
    </location>
</feature>
<feature type="zinc finger region" description="RING-type" evidence="3">
    <location>
        <begin position="302"/>
        <end position="340"/>
    </location>
</feature>
<feature type="cross-link" description="Glycyl lysine isopeptide (Lys-Gly) (interchain with G-Cter in ubiquitin)" evidence="1">
    <location>
        <position position="52"/>
    </location>
</feature>
<feature type="cross-link" description="Glycyl lysine isopeptide (Lys-Gly) (interchain with G-Cter in ubiquitin)" evidence="1">
    <location>
        <position position="299"/>
    </location>
</feature>
<feature type="splice variant" id="VSP_034453" description="In isoform 3." evidence="5">
    <original>MESGSRPSLGQVILLGTSSMVTAVLYSIYRQKAQVAQELK</original>
    <variation>MVVVLCWLEFHSPSAKDLFWQLYGRWTLEPKSYHQ</variation>
    <location>
        <begin position="1"/>
        <end position="40"/>
    </location>
</feature>
<feature type="splice variant" id="VSP_034454" description="In isoform 2." evidence="5">
    <original>NDYSKIIHQRTNT</original>
    <variation>CVSSGFYTSEVVV</variation>
    <location>
        <begin position="111"/>
        <end position="123"/>
    </location>
</feature>
<feature type="splice variant" id="VSP_034455" description="In isoform 2." evidence="5">
    <location>
        <begin position="124"/>
        <end position="352"/>
    </location>
</feature>
<feature type="sequence conflict" description="In Ref. 2; BAE41597." evidence="5" ref="2">
    <original>E</original>
    <variation>V</variation>
    <location>
        <position position="38"/>
    </location>
</feature>
<feature type="sequence conflict" description="In Ref. 2; BAB22084." evidence="5" ref="2">
    <original>V</original>
    <variation>F</variation>
    <location>
        <position position="208"/>
    </location>
</feature>
<feature type="sequence conflict" description="In Ref. 1; ACH72646 and 4; AAH19516." evidence="5" ref="1 4">
    <original>I</original>
    <variation>V</variation>
    <location>
        <position position="242"/>
    </location>
</feature>
<accession>Q8VCM5</accession>
<accession>A2AM82</accession>
<accession>A2AM84</accession>
<accession>B5M498</accession>
<accession>Q3TDK4</accession>
<accession>Q8BHF2</accession>
<accession>Q9DCV9</accession>
<name>MUL1_MOUSE</name>
<sequence length="352" mass="39835">MESGSRPSLGQVILLGTSSMVTAVLYSIYRQKAQVAQELKGAKKIHLGEDLKGILSEAPGKCVPYAVIEGAVRSVKETLNSQFVENCKGVIQRLSLQEHKMVWNRTTHLWNDYSKIIHQRTNTVPFDLVPHEDGVAVSVRVLKPLDSVDLGLETVYEKFHPSVQSFTDAIGHYISGERPKGIQETEEMLKVGATLTGIGELVLDNNAVRLQPPKQGMQYYLSSQDFDSLLHRQESSVRLWKILVLVFGFATCATLFFILRKQYLHRQERLRQQQLQEEFLEHEAQLLSQASPEDRESLKSACVVCLSNFKSCVFLECGHVCSCRQCYLALPEPKRCPICRREITRVIPLYNS</sequence>
<reference key="1">
    <citation type="journal article" date="2008" name="Cell Res.">
        <title>GIDE is a mitochondrial E3 ubiquitin ligase that induces apoptosis and slows growth.</title>
        <authorList>
            <person name="Zhang B."/>
            <person name="Huang J."/>
            <person name="Li H.-L."/>
            <person name="Liu T."/>
            <person name="Wang Y.-Y."/>
            <person name="Waterman P."/>
            <person name="Mao A.-P."/>
            <person name="Xu L.-G."/>
            <person name="Zhai Z."/>
            <person name="Liu D."/>
            <person name="Marrack P."/>
            <person name="Shu H.-B."/>
        </authorList>
    </citation>
    <scope>NUCLEOTIDE SEQUENCE [MRNA] (ISOFORM 1)</scope>
</reference>
<reference key="2">
    <citation type="journal article" date="2005" name="Science">
        <title>The transcriptional landscape of the mammalian genome.</title>
        <authorList>
            <person name="Carninci P."/>
            <person name="Kasukawa T."/>
            <person name="Katayama S."/>
            <person name="Gough J."/>
            <person name="Frith M.C."/>
            <person name="Maeda N."/>
            <person name="Oyama R."/>
            <person name="Ravasi T."/>
            <person name="Lenhard B."/>
            <person name="Wells C."/>
            <person name="Kodzius R."/>
            <person name="Shimokawa K."/>
            <person name="Bajic V.B."/>
            <person name="Brenner S.E."/>
            <person name="Batalov S."/>
            <person name="Forrest A.R."/>
            <person name="Zavolan M."/>
            <person name="Davis M.J."/>
            <person name="Wilming L.G."/>
            <person name="Aidinis V."/>
            <person name="Allen J.E."/>
            <person name="Ambesi-Impiombato A."/>
            <person name="Apweiler R."/>
            <person name="Aturaliya R.N."/>
            <person name="Bailey T.L."/>
            <person name="Bansal M."/>
            <person name="Baxter L."/>
            <person name="Beisel K.W."/>
            <person name="Bersano T."/>
            <person name="Bono H."/>
            <person name="Chalk A.M."/>
            <person name="Chiu K.P."/>
            <person name="Choudhary V."/>
            <person name="Christoffels A."/>
            <person name="Clutterbuck D.R."/>
            <person name="Crowe M.L."/>
            <person name="Dalla E."/>
            <person name="Dalrymple B.P."/>
            <person name="de Bono B."/>
            <person name="Della Gatta G."/>
            <person name="di Bernardo D."/>
            <person name="Down T."/>
            <person name="Engstrom P."/>
            <person name="Fagiolini M."/>
            <person name="Faulkner G."/>
            <person name="Fletcher C.F."/>
            <person name="Fukushima T."/>
            <person name="Furuno M."/>
            <person name="Futaki S."/>
            <person name="Gariboldi M."/>
            <person name="Georgii-Hemming P."/>
            <person name="Gingeras T.R."/>
            <person name="Gojobori T."/>
            <person name="Green R.E."/>
            <person name="Gustincich S."/>
            <person name="Harbers M."/>
            <person name="Hayashi Y."/>
            <person name="Hensch T.K."/>
            <person name="Hirokawa N."/>
            <person name="Hill D."/>
            <person name="Huminiecki L."/>
            <person name="Iacono M."/>
            <person name="Ikeo K."/>
            <person name="Iwama A."/>
            <person name="Ishikawa T."/>
            <person name="Jakt M."/>
            <person name="Kanapin A."/>
            <person name="Katoh M."/>
            <person name="Kawasawa Y."/>
            <person name="Kelso J."/>
            <person name="Kitamura H."/>
            <person name="Kitano H."/>
            <person name="Kollias G."/>
            <person name="Krishnan S.P."/>
            <person name="Kruger A."/>
            <person name="Kummerfeld S.K."/>
            <person name="Kurochkin I.V."/>
            <person name="Lareau L.F."/>
            <person name="Lazarevic D."/>
            <person name="Lipovich L."/>
            <person name="Liu J."/>
            <person name="Liuni S."/>
            <person name="McWilliam S."/>
            <person name="Madan Babu M."/>
            <person name="Madera M."/>
            <person name="Marchionni L."/>
            <person name="Matsuda H."/>
            <person name="Matsuzawa S."/>
            <person name="Miki H."/>
            <person name="Mignone F."/>
            <person name="Miyake S."/>
            <person name="Morris K."/>
            <person name="Mottagui-Tabar S."/>
            <person name="Mulder N."/>
            <person name="Nakano N."/>
            <person name="Nakauchi H."/>
            <person name="Ng P."/>
            <person name="Nilsson R."/>
            <person name="Nishiguchi S."/>
            <person name="Nishikawa S."/>
            <person name="Nori F."/>
            <person name="Ohara O."/>
            <person name="Okazaki Y."/>
            <person name="Orlando V."/>
            <person name="Pang K.C."/>
            <person name="Pavan W.J."/>
            <person name="Pavesi G."/>
            <person name="Pesole G."/>
            <person name="Petrovsky N."/>
            <person name="Piazza S."/>
            <person name="Reed J."/>
            <person name="Reid J.F."/>
            <person name="Ring B.Z."/>
            <person name="Ringwald M."/>
            <person name="Rost B."/>
            <person name="Ruan Y."/>
            <person name="Salzberg S.L."/>
            <person name="Sandelin A."/>
            <person name="Schneider C."/>
            <person name="Schoenbach C."/>
            <person name="Sekiguchi K."/>
            <person name="Semple C.A."/>
            <person name="Seno S."/>
            <person name="Sessa L."/>
            <person name="Sheng Y."/>
            <person name="Shibata Y."/>
            <person name="Shimada H."/>
            <person name="Shimada K."/>
            <person name="Silva D."/>
            <person name="Sinclair B."/>
            <person name="Sperling S."/>
            <person name="Stupka E."/>
            <person name="Sugiura K."/>
            <person name="Sultana R."/>
            <person name="Takenaka Y."/>
            <person name="Taki K."/>
            <person name="Tammoja K."/>
            <person name="Tan S.L."/>
            <person name="Tang S."/>
            <person name="Taylor M.S."/>
            <person name="Tegner J."/>
            <person name="Teichmann S.A."/>
            <person name="Ueda H.R."/>
            <person name="van Nimwegen E."/>
            <person name="Verardo R."/>
            <person name="Wei C.L."/>
            <person name="Yagi K."/>
            <person name="Yamanishi H."/>
            <person name="Zabarovsky E."/>
            <person name="Zhu S."/>
            <person name="Zimmer A."/>
            <person name="Hide W."/>
            <person name="Bult C."/>
            <person name="Grimmond S.M."/>
            <person name="Teasdale R.D."/>
            <person name="Liu E.T."/>
            <person name="Brusic V."/>
            <person name="Quackenbush J."/>
            <person name="Wahlestedt C."/>
            <person name="Mattick J.S."/>
            <person name="Hume D.A."/>
            <person name="Kai C."/>
            <person name="Sasaki D."/>
            <person name="Tomaru Y."/>
            <person name="Fukuda S."/>
            <person name="Kanamori-Katayama M."/>
            <person name="Suzuki M."/>
            <person name="Aoki J."/>
            <person name="Arakawa T."/>
            <person name="Iida J."/>
            <person name="Imamura K."/>
            <person name="Itoh M."/>
            <person name="Kato T."/>
            <person name="Kawaji H."/>
            <person name="Kawagashira N."/>
            <person name="Kawashima T."/>
            <person name="Kojima M."/>
            <person name="Kondo S."/>
            <person name="Konno H."/>
            <person name="Nakano K."/>
            <person name="Ninomiya N."/>
            <person name="Nishio T."/>
            <person name="Okada M."/>
            <person name="Plessy C."/>
            <person name="Shibata K."/>
            <person name="Shiraki T."/>
            <person name="Suzuki S."/>
            <person name="Tagami M."/>
            <person name="Waki K."/>
            <person name="Watahiki A."/>
            <person name="Okamura-Oho Y."/>
            <person name="Suzuki H."/>
            <person name="Kawai J."/>
            <person name="Hayashizaki Y."/>
        </authorList>
    </citation>
    <scope>NUCLEOTIDE SEQUENCE [LARGE SCALE MRNA] (ISOFORM 1)</scope>
    <source>
        <strain>C57BL/6J</strain>
        <strain>NOD</strain>
        <tissue>Brain cortex</tissue>
        <tissue>Head</tissue>
        <tissue>Kidney</tissue>
        <tissue>Liver</tissue>
        <tissue>Thymus</tissue>
    </source>
</reference>
<reference key="3">
    <citation type="journal article" date="2009" name="PLoS Biol.">
        <title>Lineage-specific biology revealed by a finished genome assembly of the mouse.</title>
        <authorList>
            <person name="Church D.M."/>
            <person name="Goodstadt L."/>
            <person name="Hillier L.W."/>
            <person name="Zody M.C."/>
            <person name="Goldstein S."/>
            <person name="She X."/>
            <person name="Bult C.J."/>
            <person name="Agarwala R."/>
            <person name="Cherry J.L."/>
            <person name="DiCuccio M."/>
            <person name="Hlavina W."/>
            <person name="Kapustin Y."/>
            <person name="Meric P."/>
            <person name="Maglott D."/>
            <person name="Birtle Z."/>
            <person name="Marques A.C."/>
            <person name="Graves T."/>
            <person name="Zhou S."/>
            <person name="Teague B."/>
            <person name="Potamousis K."/>
            <person name="Churas C."/>
            <person name="Place M."/>
            <person name="Herschleb J."/>
            <person name="Runnheim R."/>
            <person name="Forrest D."/>
            <person name="Amos-Landgraf J."/>
            <person name="Schwartz D.C."/>
            <person name="Cheng Z."/>
            <person name="Lindblad-Toh K."/>
            <person name="Eichler E.E."/>
            <person name="Ponting C.P."/>
        </authorList>
    </citation>
    <scope>NUCLEOTIDE SEQUENCE [LARGE SCALE GENOMIC DNA]</scope>
    <source>
        <strain>C57BL/6J</strain>
    </source>
</reference>
<reference key="4">
    <citation type="journal article" date="2004" name="Genome Res.">
        <title>The status, quality, and expansion of the NIH full-length cDNA project: the Mammalian Gene Collection (MGC).</title>
        <authorList>
            <consortium name="The MGC Project Team"/>
        </authorList>
    </citation>
    <scope>NUCLEOTIDE SEQUENCE [LARGE SCALE MRNA] (ISOFORM 1)</scope>
    <source>
        <strain>FVB/N</strain>
        <tissue>Liver</tissue>
    </source>
</reference>
<reference key="5">
    <citation type="journal article" date="2010" name="Cell">
        <title>A tissue-specific atlas of mouse protein phosphorylation and expression.</title>
        <authorList>
            <person name="Huttlin E.L."/>
            <person name="Jedrychowski M.P."/>
            <person name="Elias J.E."/>
            <person name="Goswami T."/>
            <person name="Rad R."/>
            <person name="Beausoleil S.A."/>
            <person name="Villen J."/>
            <person name="Haas W."/>
            <person name="Sowa M.E."/>
            <person name="Gygi S.P."/>
        </authorList>
    </citation>
    <scope>IDENTIFICATION BY MASS SPECTROMETRY [LARGE SCALE ANALYSIS]</scope>
    <source>
        <tissue>Brown adipose tissue</tissue>
    </source>
</reference>
<reference key="6">
    <citation type="journal article" date="2014" name="Elife">
        <title>MUL1 acts in parallel to the PINK1/parkin pathway in regulating mitofusin and compensates for loss of PINK1/parkin.</title>
        <authorList>
            <person name="Yun J."/>
            <person name="Puri R."/>
            <person name="Yang H."/>
            <person name="Lizzio M.A."/>
            <person name="Wu C."/>
            <person name="Sheng Z.H."/>
            <person name="Guo M."/>
        </authorList>
    </citation>
    <scope>FUNCTION</scope>
    <scope>TISSUE SPECIFICITY</scope>
</reference>
<evidence type="ECO:0000250" key="1">
    <source>
        <dbReference type="UniProtKB" id="Q969V5"/>
    </source>
</evidence>
<evidence type="ECO:0000255" key="2"/>
<evidence type="ECO:0000255" key="3">
    <source>
        <dbReference type="PROSITE-ProRule" id="PRU00175"/>
    </source>
</evidence>
<evidence type="ECO:0000269" key="4">
    <source>
    </source>
</evidence>
<evidence type="ECO:0000305" key="5"/>
<proteinExistence type="evidence at protein level"/>
<comment type="function">
    <text evidence="1 4">Exhibits weak E3 ubiquitin-protein ligase activity (By similarity). E3 ubiquitin ligases accept ubiquitin from an E2 ubiquitin-conjugating enzyme in the form of a thioester and then directly transfer the ubiquitin to targeted substrates (By similarity). Can ubiquitinate AKT1 preferentially at 'Lys-284' involving 'Lys-48'-linked polyubiquitination and seems to be involved in regulation of Akt signaling by targeting phosphorylated Akt to proteasomal degradation (By similarity). Mediates polyubiquitination of cytoplasmic TP53 at 'Lys-27' which targets TP53 for proteasomal degradation, thus reducing TP53 levels in the cytoplasm and mitochondrion (By similarity). Proposed to preferentially act as a SUMO E3 ligase at physiological concentrations (By similarity). Plays a role in the control of mitochondrial morphology by promoting mitochondrial fragmentation, and influences mitochondrial localization (By similarity). Likely to promote mitochondrial fission through negatively regulating the mitochondrial fusion proteins MFN1 and MFN2, acting in a pathway that is parallel to the PRKN/PINK1 regulatory pathway (PubMed:24898855). May also be involved in the sumoylation of the membrane fission protein DNM1L (By similarity). Inhibits cell growth (By similarity). When overexpressed, activates JNK through MAP3K7/TAK1 and induces caspase-dependent apoptosis (By similarity). Involved in the modulation of innate immune defense against viruses by inhibiting RIGI-dependent antiviral response (By similarity). Can mediate RIGI sumoylation and disrupt its polyubiquitination (By similarity).</text>
</comment>
<comment type="catalytic activity">
    <reaction evidence="1">
        <text>S-ubiquitinyl-[E2 ubiquitin-conjugating enzyme]-L-cysteine + [acceptor protein]-L-lysine = [E2 ubiquitin-conjugating enzyme]-L-cysteine + N(6)-ubiquitinyl-[acceptor protein]-L-lysine.</text>
        <dbReference type="EC" id="2.3.2.27"/>
    </reaction>
</comment>
<comment type="pathway">
    <text evidence="1">Protein modification; protein ubiquitination.</text>
</comment>
<comment type="pathway">
    <text evidence="1">Protein modification; protein sumoylation.</text>
</comment>
<comment type="subunit">
    <text evidence="1">Homooligomer. Interacts with MAP3K7/TAK1. Interacts with UBC9. Interacts with and sumoylates DNM1L. Interacts with MAVS. Interacts with TP53 (via N-terminus); the interaction leads to ubiquitination and proteasomal degradation of TP53.</text>
</comment>
<comment type="subcellular location">
    <subcellularLocation>
        <location evidence="1">Mitochondrion outer membrane</location>
        <topology evidence="2">Multi-pass membrane protein</topology>
    </subcellularLocation>
    <subcellularLocation>
        <location evidence="1">Peroxisome</location>
    </subcellularLocation>
    <text evidence="1">Transported in mitochondrion-derived vesicles from the mitochondrion to the peroxisome.</text>
</comment>
<comment type="alternative products">
    <event type="alternative splicing"/>
    <isoform>
        <id>Q8VCM5-1</id>
        <name>1</name>
        <sequence type="displayed"/>
    </isoform>
    <isoform>
        <id>Q8VCM5-2</id>
        <name>2</name>
        <sequence type="described" ref="VSP_034454 VSP_034455"/>
    </isoform>
    <isoform>
        <id>Q8VCM5-3</id>
        <name>3</name>
        <sequence type="described" ref="VSP_034453"/>
    </isoform>
</comment>
<comment type="tissue specificity">
    <text evidence="4">Expressed in cortical neurons (at protein level).</text>
</comment>
<comment type="domain">
    <text evidence="1">The zinc finger domain is required for E3 ligase activity.</text>
</comment>
<comment type="PTM">
    <text evidence="1">Ubiquitinated by PRKN during mitophagy, leading to its degradation and enhancement of mitophagy. Deubiquitinated by USP30.</text>
</comment>
<gene>
    <name type="primary">Mul1</name>
    <name type="synonym">Gide</name>
</gene>
<protein>
    <recommendedName>
        <fullName>Mitochondrial ubiquitin ligase activator of NFKB 1</fullName>
        <ecNumber evidence="1">2.3.2.27</ecNumber>
    </recommendedName>
    <alternativeName>
        <fullName>E3 ubiquitin-protein ligase MUL1</fullName>
    </alternativeName>
    <alternativeName>
        <fullName>Growth inhibition and death E3 ligase</fullName>
    </alternativeName>
    <alternativeName>
        <fullName evidence="1">Protein Hades</fullName>
    </alternativeName>
    <alternativeName>
        <fullName evidence="5">RING-type E3 ubiquitin transferase NFKB 1</fullName>
    </alternativeName>
</protein>
<organism>
    <name type="scientific">Mus musculus</name>
    <name type="common">Mouse</name>
    <dbReference type="NCBI Taxonomy" id="10090"/>
    <lineage>
        <taxon>Eukaryota</taxon>
        <taxon>Metazoa</taxon>
        <taxon>Chordata</taxon>
        <taxon>Craniata</taxon>
        <taxon>Vertebrata</taxon>
        <taxon>Euteleostomi</taxon>
        <taxon>Mammalia</taxon>
        <taxon>Eutheria</taxon>
        <taxon>Euarchontoglires</taxon>
        <taxon>Glires</taxon>
        <taxon>Rodentia</taxon>
        <taxon>Myomorpha</taxon>
        <taxon>Muroidea</taxon>
        <taxon>Muridae</taxon>
        <taxon>Murinae</taxon>
        <taxon>Mus</taxon>
        <taxon>Mus</taxon>
    </lineage>
</organism>